<organism>
    <name type="scientific">Rickettsia felis (strain ATCC VR-1525 / URRWXCal2)</name>
    <name type="common">Rickettsia azadi</name>
    <dbReference type="NCBI Taxonomy" id="315456"/>
    <lineage>
        <taxon>Bacteria</taxon>
        <taxon>Pseudomonadati</taxon>
        <taxon>Pseudomonadota</taxon>
        <taxon>Alphaproteobacteria</taxon>
        <taxon>Rickettsiales</taxon>
        <taxon>Rickettsiaceae</taxon>
        <taxon>Rickettsieae</taxon>
        <taxon>Rickettsia</taxon>
        <taxon>spotted fever group</taxon>
    </lineage>
</organism>
<sequence>MVQENKNFATAKAKSIRVSPRKLNLVAAFIRNMKVSEALVQLTFSPKKIAKVVKDCLQSAVANAENNLGLDIDRLVITKATVGKALVMKRVMPRAKGRATRINKFFSNLYITVTEKEDN</sequence>
<accession>Q4UMS4</accession>
<feature type="chain" id="PRO_0000243199" description="Large ribosomal subunit protein uL22">
    <location>
        <begin position="1"/>
        <end position="119"/>
    </location>
</feature>
<comment type="function">
    <text evidence="1">This protein binds specifically to 23S rRNA; its binding is stimulated by other ribosomal proteins, e.g. L4, L17, and L20. It is important during the early stages of 50S assembly. It makes multiple contacts with different domains of the 23S rRNA in the assembled 50S subunit and ribosome (By similarity).</text>
</comment>
<comment type="function">
    <text evidence="1">The globular domain of the protein is located near the polypeptide exit tunnel on the outside of the subunit, while an extended beta-hairpin is found that lines the wall of the exit tunnel in the center of the 70S ribosome.</text>
</comment>
<comment type="subunit">
    <text evidence="1">Part of the 50S ribosomal subunit.</text>
</comment>
<comment type="similarity">
    <text evidence="1">Belongs to the universal ribosomal protein uL22 family.</text>
</comment>
<gene>
    <name evidence="1" type="primary">rplV</name>
    <name type="ordered locus">RF_0283</name>
</gene>
<protein>
    <recommendedName>
        <fullName evidence="1">Large ribosomal subunit protein uL22</fullName>
    </recommendedName>
    <alternativeName>
        <fullName evidence="2">50S ribosomal protein L22</fullName>
    </alternativeName>
</protein>
<keyword id="KW-0687">Ribonucleoprotein</keyword>
<keyword id="KW-0689">Ribosomal protein</keyword>
<keyword id="KW-0694">RNA-binding</keyword>
<keyword id="KW-0699">rRNA-binding</keyword>
<reference key="1">
    <citation type="journal article" date="2005" name="PLoS Biol.">
        <title>The genome sequence of Rickettsia felis identifies the first putative conjugative plasmid in an obligate intracellular parasite.</title>
        <authorList>
            <person name="Ogata H."/>
            <person name="Renesto P."/>
            <person name="Audic S."/>
            <person name="Robert C."/>
            <person name="Blanc G."/>
            <person name="Fournier P.-E."/>
            <person name="Parinello H."/>
            <person name="Claverie J.-M."/>
            <person name="Raoult D."/>
        </authorList>
    </citation>
    <scope>NUCLEOTIDE SEQUENCE [LARGE SCALE GENOMIC DNA]</scope>
    <source>
        <strain>ATCC VR-1525 / URRWXCal2</strain>
    </source>
</reference>
<name>RL22_RICFE</name>
<proteinExistence type="inferred from homology"/>
<dbReference type="EMBL" id="CP000053">
    <property type="protein sequence ID" value="AAY61134.1"/>
    <property type="molecule type" value="Genomic_DNA"/>
</dbReference>
<dbReference type="SMR" id="Q4UMS4"/>
<dbReference type="STRING" id="315456.RF_0283"/>
<dbReference type="KEGG" id="rfe:RF_0283"/>
<dbReference type="eggNOG" id="COG0091">
    <property type="taxonomic scope" value="Bacteria"/>
</dbReference>
<dbReference type="HOGENOM" id="CLU_083987_3_0_5"/>
<dbReference type="OrthoDB" id="9805969at2"/>
<dbReference type="Proteomes" id="UP000008548">
    <property type="component" value="Chromosome"/>
</dbReference>
<dbReference type="GO" id="GO:0022625">
    <property type="term" value="C:cytosolic large ribosomal subunit"/>
    <property type="evidence" value="ECO:0007669"/>
    <property type="project" value="TreeGrafter"/>
</dbReference>
<dbReference type="GO" id="GO:0019843">
    <property type="term" value="F:rRNA binding"/>
    <property type="evidence" value="ECO:0007669"/>
    <property type="project" value="UniProtKB-UniRule"/>
</dbReference>
<dbReference type="GO" id="GO:0003735">
    <property type="term" value="F:structural constituent of ribosome"/>
    <property type="evidence" value="ECO:0007669"/>
    <property type="project" value="InterPro"/>
</dbReference>
<dbReference type="GO" id="GO:0006412">
    <property type="term" value="P:translation"/>
    <property type="evidence" value="ECO:0007669"/>
    <property type="project" value="UniProtKB-UniRule"/>
</dbReference>
<dbReference type="CDD" id="cd00336">
    <property type="entry name" value="Ribosomal_L22"/>
    <property type="match status" value="1"/>
</dbReference>
<dbReference type="Gene3D" id="3.90.470.10">
    <property type="entry name" value="Ribosomal protein L22/L17"/>
    <property type="match status" value="1"/>
</dbReference>
<dbReference type="HAMAP" id="MF_01331_B">
    <property type="entry name" value="Ribosomal_uL22_B"/>
    <property type="match status" value="1"/>
</dbReference>
<dbReference type="InterPro" id="IPR001063">
    <property type="entry name" value="Ribosomal_uL22"/>
</dbReference>
<dbReference type="InterPro" id="IPR005727">
    <property type="entry name" value="Ribosomal_uL22_bac/chlpt-type"/>
</dbReference>
<dbReference type="InterPro" id="IPR047867">
    <property type="entry name" value="Ribosomal_uL22_bac/org-type"/>
</dbReference>
<dbReference type="InterPro" id="IPR018260">
    <property type="entry name" value="Ribosomal_uL22_CS"/>
</dbReference>
<dbReference type="InterPro" id="IPR036394">
    <property type="entry name" value="Ribosomal_uL22_sf"/>
</dbReference>
<dbReference type="NCBIfam" id="TIGR01044">
    <property type="entry name" value="rplV_bact"/>
    <property type="match status" value="1"/>
</dbReference>
<dbReference type="PANTHER" id="PTHR13501">
    <property type="entry name" value="CHLOROPLAST 50S RIBOSOMAL PROTEIN L22-RELATED"/>
    <property type="match status" value="1"/>
</dbReference>
<dbReference type="PANTHER" id="PTHR13501:SF8">
    <property type="entry name" value="LARGE RIBOSOMAL SUBUNIT PROTEIN UL22M"/>
    <property type="match status" value="1"/>
</dbReference>
<dbReference type="Pfam" id="PF00237">
    <property type="entry name" value="Ribosomal_L22"/>
    <property type="match status" value="1"/>
</dbReference>
<dbReference type="SUPFAM" id="SSF54843">
    <property type="entry name" value="Ribosomal protein L22"/>
    <property type="match status" value="1"/>
</dbReference>
<dbReference type="PROSITE" id="PS00464">
    <property type="entry name" value="RIBOSOMAL_L22"/>
    <property type="match status" value="1"/>
</dbReference>
<evidence type="ECO:0000255" key="1">
    <source>
        <dbReference type="HAMAP-Rule" id="MF_01331"/>
    </source>
</evidence>
<evidence type="ECO:0000305" key="2"/>